<feature type="chain" id="PRO_0000208882" description="Prospero homeobox protein 1">
    <location>
        <begin position="1"/>
        <end position="736"/>
    </location>
</feature>
<feature type="domain" description="Prospero-type homeo" evidence="3">
    <location>
        <begin position="576"/>
        <end position="634"/>
    </location>
</feature>
<feature type="domain" description="Prospero" evidence="3">
    <location>
        <begin position="635"/>
        <end position="734"/>
    </location>
</feature>
<feature type="region of interest" description="Disordered" evidence="4">
    <location>
        <begin position="103"/>
        <end position="146"/>
    </location>
</feature>
<feature type="region of interest" description="Disordered" evidence="4">
    <location>
        <begin position="180"/>
        <end position="220"/>
    </location>
</feature>
<feature type="region of interest" description="Disordered" evidence="4">
    <location>
        <begin position="261"/>
        <end position="301"/>
    </location>
</feature>
<feature type="region of interest" description="Disordered" evidence="4">
    <location>
        <begin position="319"/>
        <end position="344"/>
    </location>
</feature>
<feature type="region of interest" description="Disordered" evidence="4">
    <location>
        <begin position="445"/>
        <end position="465"/>
    </location>
</feature>
<feature type="region of interest" description="Disordered" evidence="4">
    <location>
        <begin position="499"/>
        <end position="518"/>
    </location>
</feature>
<feature type="region of interest" description="Homeo-Prospero" evidence="3">
    <location>
        <begin position="576"/>
        <end position="734"/>
    </location>
</feature>
<feature type="short sequence motif" description="Nuclear localization signal" evidence="2">
    <location>
        <begin position="163"/>
        <end position="168"/>
    </location>
</feature>
<feature type="compositionally biased region" description="Polar residues" evidence="4">
    <location>
        <begin position="103"/>
        <end position="135"/>
    </location>
</feature>
<feature type="compositionally biased region" description="Acidic residues" evidence="4">
    <location>
        <begin position="264"/>
        <end position="274"/>
    </location>
</feature>
<feature type="compositionally biased region" description="Basic and acidic residues" evidence="4">
    <location>
        <begin position="319"/>
        <end position="335"/>
    </location>
</feature>
<feature type="compositionally biased region" description="Low complexity" evidence="4">
    <location>
        <begin position="450"/>
        <end position="460"/>
    </location>
</feature>
<feature type="compositionally biased region" description="Basic and acidic residues" evidence="4">
    <location>
        <begin position="505"/>
        <end position="518"/>
    </location>
</feature>
<feature type="splice variant" id="VSP_002305" description="In isoform Short." evidence="7">
    <location>
        <begin position="611"/>
        <end position="675"/>
    </location>
</feature>
<sequence>MPDHDSTALLSRQTKRRRVDIGVKRTVGTASAFFAKARATFFSAMNPQGSEQDVEYSVVQHADGEKPNVLRKLLKRANSYEDAMMPFPGATIISQLLKNNMNKNGGTEPSFQASGLSSTGSEVHQEDVCSNSSRDSPQECLSPFGRPTMSQFDVDRLCDEHLRAKRARVENIIRGMSHSPRVALRGNENEREIRPQSVSPRESYRENKRKQNWPQQQQQSFQQLVSARKEQKREERRQLKQQLEDMQKQLRQLQEEFYQIYDSTDSENDEDGNLSEDRMRSETVDAQAGDSVGRSDNEMCELDPGQFIDRARALIREQEIGENKPKREGPKEKDQGPNSFHPEGKHLAETLKQELNTAMSQVVDTVVKVFSSKPSRQLPQVFPPLQIPQARFAVNGENHNFHTANQRLQCFGDVIIPNPLDTFSSVPMPGATDQTDALPLVVRKNSSDQPASAPPAGGHHASLHQSPLSATAGFSTSSFRHPFPLPLMAYPFQSPLGAPSASFPGKERASPESLDLTRETTSLRTKMSSHHMNHHPCSPAHPPSAAEGLSLSLIKSECGDLQDMSEISPYSGSAMQEGLSPNHLKKAKLMFFYTRYPSSNMLKTYFSDVKFNRCITSQLIKWFSNFREFYYIQMEKYARQAINDGVTSTEELSITRDCELYRALNMHYNKANDFEVPERFLEVAQITLREFFNAIIAGKDVDPSWKKAIYKVICKLDSEVPEIFKSPNCLQELLHE</sequence>
<reference key="1">
    <citation type="journal article" date="1996" name="Dev. Dyn.">
        <title>Chicken homeobox gene Prox 1 related to Drosophila prospero is expressed in the developing lens and retina.</title>
        <authorList>
            <person name="Tomarev S.I."/>
            <person name="Sundin O."/>
            <person name="Banerjee-Basu S."/>
            <person name="Duncan M.K."/>
            <person name="Yang J.-M."/>
            <person name="Piatigorsky J."/>
        </authorList>
    </citation>
    <scope>NUCLEOTIDE SEQUENCE [MRNA]</scope>
    <scope>FUNCTION</scope>
    <scope>TISSUE SPECIFICITY</scope>
    <scope>DEVELOPMENTAL STAGE</scope>
    <source>
        <tissue>Embryonic lens</tissue>
    </source>
</reference>
<reference key="2">
    <citation type="journal article" date="1996" name="Dev. Dyn.">
        <authorList>
            <person name="Tomarev S.I."/>
            <person name="Sundin O."/>
            <person name="Banerjee-Basu S."/>
            <person name="Duncan M.K."/>
            <person name="Yang J.-M."/>
            <person name="Piatigorsky J."/>
        </authorList>
    </citation>
    <scope>ERRATUM OF PUBMED:8853985</scope>
</reference>
<accession>Q91018</accession>
<protein>
    <recommendedName>
        <fullName>Prospero homeobox protein 1</fullName>
    </recommendedName>
    <alternativeName>
        <fullName>Homeobox prospero-like protein PROX1</fullName>
        <shortName>PROX-1</shortName>
    </alternativeName>
</protein>
<name>PROX1_CHICK</name>
<proteinExistence type="evidence at transcript level"/>
<gene>
    <name type="primary">PROX1</name>
</gene>
<organism>
    <name type="scientific">Gallus gallus</name>
    <name type="common">Chicken</name>
    <dbReference type="NCBI Taxonomy" id="9031"/>
    <lineage>
        <taxon>Eukaryota</taxon>
        <taxon>Metazoa</taxon>
        <taxon>Chordata</taxon>
        <taxon>Craniata</taxon>
        <taxon>Vertebrata</taxon>
        <taxon>Euteleostomi</taxon>
        <taxon>Archelosauria</taxon>
        <taxon>Archosauria</taxon>
        <taxon>Dinosauria</taxon>
        <taxon>Saurischia</taxon>
        <taxon>Theropoda</taxon>
        <taxon>Coelurosauria</taxon>
        <taxon>Aves</taxon>
        <taxon>Neognathae</taxon>
        <taxon>Galloanserae</taxon>
        <taxon>Galliformes</taxon>
        <taxon>Phasianidae</taxon>
        <taxon>Phasianinae</taxon>
        <taxon>Gallus</taxon>
    </lineage>
</organism>
<keyword id="KW-0025">Alternative splicing</keyword>
<keyword id="KW-0090">Biological rhythms</keyword>
<keyword id="KW-0217">Developmental protein</keyword>
<keyword id="KW-0238">DNA-binding</keyword>
<keyword id="KW-0371">Homeobox</keyword>
<keyword id="KW-0539">Nucleus</keyword>
<keyword id="KW-1185">Reference proteome</keyword>
<keyword id="KW-0678">Repressor</keyword>
<keyword id="KW-0804">Transcription</keyword>
<keyword id="KW-0805">Transcription regulation</keyword>
<evidence type="ECO:0000250" key="1">
    <source>
        <dbReference type="UniProtKB" id="P48437"/>
    </source>
</evidence>
<evidence type="ECO:0000255" key="2"/>
<evidence type="ECO:0000255" key="3">
    <source>
        <dbReference type="PROSITE-ProRule" id="PRU01162"/>
    </source>
</evidence>
<evidence type="ECO:0000256" key="4">
    <source>
        <dbReference type="SAM" id="MobiDB-lite"/>
    </source>
</evidence>
<evidence type="ECO:0000269" key="5">
    <source>
    </source>
</evidence>
<evidence type="ECO:0000303" key="6">
    <source>
    </source>
</evidence>
<evidence type="ECO:0000305" key="7"/>
<comment type="function">
    <text evidence="1 6">Transcription factor which may be involved in developmental processes such as cell fate determination, gene transcriptional regulation and progenitor cell regulation in a number of organs. May be essential in the development and function of the eye. May play a role in the regulation of the circadian rhythm by repressing the expression of clock genes.</text>
</comment>
<comment type="subcellular location">
    <subcellularLocation>
        <location evidence="7">Nucleus</location>
    </subcellularLocation>
</comment>
<comment type="alternative products">
    <event type="alternative splicing"/>
    <isoform>
        <id>Q91018-1</id>
        <name>Long</name>
        <sequence type="displayed"/>
    </isoform>
    <isoform>
        <id>Q91018-2</id>
        <name>Short</name>
        <sequence type="described" ref="VSP_002305"/>
    </isoform>
    <text>Additional isoforms seem to exist.</text>
</comment>
<comment type="tissue specificity">
    <text evidence="5">Expressed most actively in the developing lens and midgut and at lower levels in the developing brain, heart, muscle and retina.</text>
</comment>
<comment type="developmental stage">
    <text evidence="5">First detected at stage 14 in the early lens placode. At later stages of development, it was observed throughout the lens, but it appeared more abundant around the bow region of the equator than in the anterior epithelium or the fibers. In the retina, expression was detected mainly in the inner nuclear layer during later stages of histogenesis.</text>
</comment>
<comment type="domain">
    <text evidence="3">The Prospero-type homeodomain and the adjacent Prospero domain act as a single structural unit, the Homeo-Prospero domain.</text>
</comment>
<comment type="similarity">
    <text evidence="3">Belongs to the Prospero homeodomain family.</text>
</comment>
<dbReference type="EMBL" id="U46563">
    <property type="protein sequence ID" value="AAC59938.1"/>
    <property type="molecule type" value="mRNA"/>
</dbReference>
<dbReference type="PIR" id="JC5495">
    <property type="entry name" value="JC5495"/>
</dbReference>
<dbReference type="RefSeq" id="NP_001005616.1">
    <molecule id="Q91018-1"/>
    <property type="nucleotide sequence ID" value="NM_001005616.1"/>
</dbReference>
<dbReference type="BMRB" id="Q91018"/>
<dbReference type="SMR" id="Q91018"/>
<dbReference type="FunCoup" id="Q91018">
    <property type="interactions" value="179"/>
</dbReference>
<dbReference type="STRING" id="9031.ENSGALP00000015910"/>
<dbReference type="PaxDb" id="9031-ENSGALP00000015910"/>
<dbReference type="GeneID" id="395802"/>
<dbReference type="KEGG" id="gga:395802"/>
<dbReference type="CTD" id="5629"/>
<dbReference type="VEuPathDB" id="HostDB:geneid_395802"/>
<dbReference type="eggNOG" id="KOG3779">
    <property type="taxonomic scope" value="Eukaryota"/>
</dbReference>
<dbReference type="InParanoid" id="Q91018"/>
<dbReference type="OrthoDB" id="10038576at2759"/>
<dbReference type="PhylomeDB" id="Q91018"/>
<dbReference type="PRO" id="PR:Q91018"/>
<dbReference type="Proteomes" id="UP000000539">
    <property type="component" value="Unassembled WGS sequence"/>
</dbReference>
<dbReference type="GO" id="GO:0005737">
    <property type="term" value="C:cytoplasm"/>
    <property type="evidence" value="ECO:0000314"/>
    <property type="project" value="BHF-UCL"/>
</dbReference>
<dbReference type="GO" id="GO:0005634">
    <property type="term" value="C:nucleus"/>
    <property type="evidence" value="ECO:0000314"/>
    <property type="project" value="BHF-UCL"/>
</dbReference>
<dbReference type="GO" id="GO:0000981">
    <property type="term" value="F:DNA-binding transcription factor activity, RNA polymerase II-specific"/>
    <property type="evidence" value="ECO:0000318"/>
    <property type="project" value="GO_Central"/>
</dbReference>
<dbReference type="GO" id="GO:0000978">
    <property type="term" value="F:RNA polymerase II cis-regulatory region sequence-specific DNA binding"/>
    <property type="evidence" value="ECO:0000318"/>
    <property type="project" value="GO_Central"/>
</dbReference>
<dbReference type="GO" id="GO:0055013">
    <property type="term" value="P:cardiac muscle cell development"/>
    <property type="evidence" value="ECO:0000270"/>
    <property type="project" value="BHF-UCL"/>
</dbReference>
<dbReference type="GO" id="GO:0021516">
    <property type="term" value="P:dorsal spinal cord development"/>
    <property type="evidence" value="ECO:0000270"/>
    <property type="project" value="BHF-UCL"/>
</dbReference>
<dbReference type="GO" id="GO:0007507">
    <property type="term" value="P:heart development"/>
    <property type="evidence" value="ECO:0000270"/>
    <property type="project" value="BHF-UCL"/>
</dbReference>
<dbReference type="GO" id="GO:0070365">
    <property type="term" value="P:hepatocyte differentiation"/>
    <property type="evidence" value="ECO:0000270"/>
    <property type="project" value="BHF-UCL"/>
</dbReference>
<dbReference type="GO" id="GO:0001822">
    <property type="term" value="P:kidney development"/>
    <property type="evidence" value="ECO:0000270"/>
    <property type="project" value="BHF-UCL"/>
</dbReference>
<dbReference type="GO" id="GO:0002088">
    <property type="term" value="P:lens development in camera-type eye"/>
    <property type="evidence" value="ECO:0000270"/>
    <property type="project" value="BHF-UCL"/>
</dbReference>
<dbReference type="GO" id="GO:0070309">
    <property type="term" value="P:lens fiber cell morphogenesis"/>
    <property type="evidence" value="ECO:0000270"/>
    <property type="project" value="BHF-UCL"/>
</dbReference>
<dbReference type="GO" id="GO:0001889">
    <property type="term" value="P:liver development"/>
    <property type="evidence" value="ECO:0000270"/>
    <property type="project" value="BHF-UCL"/>
</dbReference>
<dbReference type="GO" id="GO:0001945">
    <property type="term" value="P:lymph vessel development"/>
    <property type="evidence" value="ECO:0000270"/>
    <property type="project" value="BHF-UCL"/>
</dbReference>
<dbReference type="GO" id="GO:0001946">
    <property type="term" value="P:lymphangiogenesis"/>
    <property type="evidence" value="ECO:0000270"/>
    <property type="project" value="BHF-UCL"/>
</dbReference>
<dbReference type="GO" id="GO:0021915">
    <property type="term" value="P:neural tube development"/>
    <property type="evidence" value="ECO:0000270"/>
    <property type="project" value="BHF-UCL"/>
</dbReference>
<dbReference type="GO" id="GO:0030910">
    <property type="term" value="P:olfactory placode formation"/>
    <property type="evidence" value="ECO:0000270"/>
    <property type="project" value="BHF-UCL"/>
</dbReference>
<dbReference type="GO" id="GO:0043049">
    <property type="term" value="P:otic placode formation"/>
    <property type="evidence" value="ECO:0000270"/>
    <property type="project" value="BHF-UCL"/>
</dbReference>
<dbReference type="GO" id="GO:0031016">
    <property type="term" value="P:pancreas development"/>
    <property type="evidence" value="ECO:0000270"/>
    <property type="project" value="BHF-UCL"/>
</dbReference>
<dbReference type="GO" id="GO:0006357">
    <property type="term" value="P:regulation of transcription by RNA polymerase II"/>
    <property type="evidence" value="ECO:0000318"/>
    <property type="project" value="GO_Central"/>
</dbReference>
<dbReference type="GO" id="GO:0060042">
    <property type="term" value="P:retina morphogenesis in camera-type eye"/>
    <property type="evidence" value="ECO:0000270"/>
    <property type="project" value="BHF-UCL"/>
</dbReference>
<dbReference type="GO" id="GO:0048511">
    <property type="term" value="P:rhythmic process"/>
    <property type="evidence" value="ECO:0007669"/>
    <property type="project" value="UniProtKB-KW"/>
</dbReference>
<dbReference type="FunFam" id="1.10.10.500:FF:000001">
    <property type="entry name" value="Prospero homeobox protein 1"/>
    <property type="match status" value="1"/>
</dbReference>
<dbReference type="Gene3D" id="1.10.10.500">
    <property type="entry name" value="Homeo-prospero domain"/>
    <property type="match status" value="1"/>
</dbReference>
<dbReference type="InterPro" id="IPR023082">
    <property type="entry name" value="Homeo_prospero_dom"/>
</dbReference>
<dbReference type="InterPro" id="IPR037131">
    <property type="entry name" value="Homeo_prospero_dom_sf"/>
</dbReference>
<dbReference type="InterPro" id="IPR009057">
    <property type="entry name" value="Homeodomain-like_sf"/>
</dbReference>
<dbReference type="InterPro" id="IPR039350">
    <property type="entry name" value="Prospero_homeodomain"/>
</dbReference>
<dbReference type="PANTHER" id="PTHR12198">
    <property type="entry name" value="HOMEOBOX PROTEIN PROSPERO/PROX-1/CEH-26"/>
    <property type="match status" value="1"/>
</dbReference>
<dbReference type="PANTHER" id="PTHR12198:SF6">
    <property type="entry name" value="PROSPERO HOMEOBOX PROTEIN 1"/>
    <property type="match status" value="1"/>
</dbReference>
<dbReference type="Pfam" id="PF05044">
    <property type="entry name" value="HPD"/>
    <property type="match status" value="1"/>
</dbReference>
<dbReference type="SUPFAM" id="SSF46689">
    <property type="entry name" value="Homeodomain-like"/>
    <property type="match status" value="1"/>
</dbReference>
<dbReference type="PROSITE" id="PS51818">
    <property type="entry name" value="HOMEO_PROSPERO"/>
    <property type="match status" value="1"/>
</dbReference>